<name>ACSA_SHESR</name>
<sequence>MSSQSLYKVSGNIAANALVNNDQYKKMYQESIVNPEGFWREHGKRIDWIKPYTKIKKTSFDDHNLSINWFYDGTLNASANCLDRHLAEHSDRVAIIWEGDNASEQRKITYGELHTQVCKFANALRSQGVRRGDIVTIYMPMVPEAAVAMLACARIGAVHSVVFGGFSPDSIASRVIDGKSKVVITADEGMRGGRAIPLKRNIDDALKHPDVTSVEKVIVLKRTGGKVDWVEGRDVWWHSLVETASEHCAIEEMGAEDPLFLLYTSGSTGNPKGVLHTTGGYMVYASMTHEYVFDYKPGEIYWCTADVGWITGHSYMVYGPLANGATVLIHEGIPNHPSPARLGEMIDRHKVNILYTAPTLIRALMAEGKQHFDKYDGSSLRIMGSVGEPINPEAWRWYHEVIGHEHCPIVDTWWQTETGGILITPLPGATDTKPGSATRPFFGVQPALVDNMGNILEGATEGNLVLLDSWPGQMRTVYGDHERFVLTYFKTFRGMYFTGDGARRDEDGYYWITGRVDDVINVSGHRLGTAEVESALVSHELVAEAAVVGYPHDIKGQGIYAYVTLTRGTEESEELRQELRQWVRKEIGALATPDLIQWATGLPKTRSGKIMRRFLRKIAANEVTNLGDASTLADPAVIETLIETRLNRNE</sequence>
<evidence type="ECO:0000255" key="1">
    <source>
        <dbReference type="HAMAP-Rule" id="MF_01123"/>
    </source>
</evidence>
<protein>
    <recommendedName>
        <fullName evidence="1">Acetyl-coenzyme A synthetase</fullName>
        <shortName evidence="1">AcCoA synthetase</shortName>
        <shortName evidence="1">Acs</shortName>
        <ecNumber evidence="1">6.2.1.1</ecNumber>
    </recommendedName>
    <alternativeName>
        <fullName evidence="1">Acetate--CoA ligase</fullName>
    </alternativeName>
    <alternativeName>
        <fullName evidence="1">Acyl-activating enzyme</fullName>
    </alternativeName>
</protein>
<comment type="function">
    <text evidence="1">Catalyzes the conversion of acetate into acetyl-CoA (AcCoA), an essential intermediate at the junction of anabolic and catabolic pathways. AcsA undergoes a two-step reaction. In the first half reaction, AcsA combines acetate with ATP to form acetyl-adenylate (AcAMP) intermediate. In the second half reaction, it can then transfer the acetyl group from AcAMP to the sulfhydryl group of CoA, forming the product AcCoA.</text>
</comment>
<comment type="catalytic activity">
    <reaction evidence="1">
        <text>acetate + ATP + CoA = acetyl-CoA + AMP + diphosphate</text>
        <dbReference type="Rhea" id="RHEA:23176"/>
        <dbReference type="ChEBI" id="CHEBI:30089"/>
        <dbReference type="ChEBI" id="CHEBI:30616"/>
        <dbReference type="ChEBI" id="CHEBI:33019"/>
        <dbReference type="ChEBI" id="CHEBI:57287"/>
        <dbReference type="ChEBI" id="CHEBI:57288"/>
        <dbReference type="ChEBI" id="CHEBI:456215"/>
        <dbReference type="EC" id="6.2.1.1"/>
    </reaction>
</comment>
<comment type="cofactor">
    <cofactor evidence="1">
        <name>Mg(2+)</name>
        <dbReference type="ChEBI" id="CHEBI:18420"/>
    </cofactor>
</comment>
<comment type="PTM">
    <text evidence="1">Acetylated. Deacetylation by the SIR2-homolog deacetylase activates the enzyme.</text>
</comment>
<comment type="similarity">
    <text evidence="1">Belongs to the ATP-dependent AMP-binding enzyme family.</text>
</comment>
<reference key="1">
    <citation type="submission" date="2006-08" db="EMBL/GenBank/DDBJ databases">
        <title>Complete sequence of chromosome 1 of Shewanella sp. MR-7.</title>
        <authorList>
            <person name="Copeland A."/>
            <person name="Lucas S."/>
            <person name="Lapidus A."/>
            <person name="Barry K."/>
            <person name="Detter J.C."/>
            <person name="Glavina del Rio T."/>
            <person name="Hammon N."/>
            <person name="Israni S."/>
            <person name="Dalin E."/>
            <person name="Tice H."/>
            <person name="Pitluck S."/>
            <person name="Kiss H."/>
            <person name="Brettin T."/>
            <person name="Bruce D."/>
            <person name="Han C."/>
            <person name="Tapia R."/>
            <person name="Gilna P."/>
            <person name="Schmutz J."/>
            <person name="Larimer F."/>
            <person name="Land M."/>
            <person name="Hauser L."/>
            <person name="Kyrpides N."/>
            <person name="Mikhailova N."/>
            <person name="Nealson K."/>
            <person name="Konstantinidis K."/>
            <person name="Klappenbach J."/>
            <person name="Tiedje J."/>
            <person name="Richardson P."/>
        </authorList>
    </citation>
    <scope>NUCLEOTIDE SEQUENCE [LARGE SCALE GENOMIC DNA]</scope>
    <source>
        <strain>MR-7</strain>
    </source>
</reference>
<organism>
    <name type="scientific">Shewanella sp. (strain MR-7)</name>
    <dbReference type="NCBI Taxonomy" id="60481"/>
    <lineage>
        <taxon>Bacteria</taxon>
        <taxon>Pseudomonadati</taxon>
        <taxon>Pseudomonadota</taxon>
        <taxon>Gammaproteobacteria</taxon>
        <taxon>Alteromonadales</taxon>
        <taxon>Shewanellaceae</taxon>
        <taxon>Shewanella</taxon>
    </lineage>
</organism>
<dbReference type="EC" id="6.2.1.1" evidence="1"/>
<dbReference type="EMBL" id="CP000444">
    <property type="protein sequence ID" value="ABI43419.1"/>
    <property type="molecule type" value="Genomic_DNA"/>
</dbReference>
<dbReference type="SMR" id="Q0HTY6"/>
<dbReference type="KEGG" id="shm:Shewmr7_2434"/>
<dbReference type="HOGENOM" id="CLU_000022_3_6_6"/>
<dbReference type="GO" id="GO:0005829">
    <property type="term" value="C:cytosol"/>
    <property type="evidence" value="ECO:0007669"/>
    <property type="project" value="TreeGrafter"/>
</dbReference>
<dbReference type="GO" id="GO:0003987">
    <property type="term" value="F:acetate-CoA ligase activity"/>
    <property type="evidence" value="ECO:0007669"/>
    <property type="project" value="UniProtKB-UniRule"/>
</dbReference>
<dbReference type="GO" id="GO:0016208">
    <property type="term" value="F:AMP binding"/>
    <property type="evidence" value="ECO:0007669"/>
    <property type="project" value="InterPro"/>
</dbReference>
<dbReference type="GO" id="GO:0005524">
    <property type="term" value="F:ATP binding"/>
    <property type="evidence" value="ECO:0007669"/>
    <property type="project" value="UniProtKB-KW"/>
</dbReference>
<dbReference type="GO" id="GO:0046872">
    <property type="term" value="F:metal ion binding"/>
    <property type="evidence" value="ECO:0007669"/>
    <property type="project" value="UniProtKB-KW"/>
</dbReference>
<dbReference type="GO" id="GO:0019427">
    <property type="term" value="P:acetyl-CoA biosynthetic process from acetate"/>
    <property type="evidence" value="ECO:0007669"/>
    <property type="project" value="InterPro"/>
</dbReference>
<dbReference type="CDD" id="cd05966">
    <property type="entry name" value="ACS"/>
    <property type="match status" value="1"/>
</dbReference>
<dbReference type="FunFam" id="3.30.300.30:FF:000004">
    <property type="entry name" value="Acetyl-coenzyme A synthetase"/>
    <property type="match status" value="1"/>
</dbReference>
<dbReference type="FunFam" id="3.40.50.12780:FF:000001">
    <property type="entry name" value="Acetyl-coenzyme A synthetase"/>
    <property type="match status" value="1"/>
</dbReference>
<dbReference type="Gene3D" id="3.30.300.30">
    <property type="match status" value="1"/>
</dbReference>
<dbReference type="Gene3D" id="3.40.50.12780">
    <property type="entry name" value="N-terminal domain of ligase-like"/>
    <property type="match status" value="1"/>
</dbReference>
<dbReference type="HAMAP" id="MF_01123">
    <property type="entry name" value="Ac_CoA_synth"/>
    <property type="match status" value="1"/>
</dbReference>
<dbReference type="InterPro" id="IPR011904">
    <property type="entry name" value="Ac_CoA_lig"/>
</dbReference>
<dbReference type="InterPro" id="IPR032387">
    <property type="entry name" value="ACAS_N"/>
</dbReference>
<dbReference type="InterPro" id="IPR025110">
    <property type="entry name" value="AMP-bd_C"/>
</dbReference>
<dbReference type="InterPro" id="IPR045851">
    <property type="entry name" value="AMP-bd_C_sf"/>
</dbReference>
<dbReference type="InterPro" id="IPR020845">
    <property type="entry name" value="AMP-binding_CS"/>
</dbReference>
<dbReference type="InterPro" id="IPR000873">
    <property type="entry name" value="AMP-dep_synth/lig_dom"/>
</dbReference>
<dbReference type="InterPro" id="IPR042099">
    <property type="entry name" value="ANL_N_sf"/>
</dbReference>
<dbReference type="NCBIfam" id="TIGR02188">
    <property type="entry name" value="Ac_CoA_lig_AcsA"/>
    <property type="match status" value="1"/>
</dbReference>
<dbReference type="NCBIfam" id="NF001208">
    <property type="entry name" value="PRK00174.1"/>
    <property type="match status" value="1"/>
</dbReference>
<dbReference type="PANTHER" id="PTHR24095">
    <property type="entry name" value="ACETYL-COENZYME A SYNTHETASE"/>
    <property type="match status" value="1"/>
</dbReference>
<dbReference type="PANTHER" id="PTHR24095:SF243">
    <property type="entry name" value="ACETYL-COENZYME A SYNTHETASE"/>
    <property type="match status" value="1"/>
</dbReference>
<dbReference type="Pfam" id="PF16177">
    <property type="entry name" value="ACAS_N"/>
    <property type="match status" value="1"/>
</dbReference>
<dbReference type="Pfam" id="PF00501">
    <property type="entry name" value="AMP-binding"/>
    <property type="match status" value="1"/>
</dbReference>
<dbReference type="Pfam" id="PF13193">
    <property type="entry name" value="AMP-binding_C"/>
    <property type="match status" value="1"/>
</dbReference>
<dbReference type="SUPFAM" id="SSF56801">
    <property type="entry name" value="Acetyl-CoA synthetase-like"/>
    <property type="match status" value="1"/>
</dbReference>
<dbReference type="PROSITE" id="PS00455">
    <property type="entry name" value="AMP_BINDING"/>
    <property type="match status" value="1"/>
</dbReference>
<keyword id="KW-0007">Acetylation</keyword>
<keyword id="KW-0067">ATP-binding</keyword>
<keyword id="KW-0436">Ligase</keyword>
<keyword id="KW-0460">Magnesium</keyword>
<keyword id="KW-0479">Metal-binding</keyword>
<keyword id="KW-0547">Nucleotide-binding</keyword>
<accession>Q0HTY6</accession>
<gene>
    <name evidence="1" type="primary">acsA</name>
    <name type="ordered locus">Shewmr7_2434</name>
</gene>
<proteinExistence type="inferred from homology"/>
<feature type="chain" id="PRO_1000065324" description="Acetyl-coenzyme A synthetase">
    <location>
        <begin position="1"/>
        <end position="650"/>
    </location>
</feature>
<feature type="binding site" evidence="1">
    <location>
        <begin position="191"/>
        <end position="194"/>
    </location>
    <ligand>
        <name>CoA</name>
        <dbReference type="ChEBI" id="CHEBI:57287"/>
    </ligand>
</feature>
<feature type="binding site" evidence="1">
    <location>
        <position position="311"/>
    </location>
    <ligand>
        <name>CoA</name>
        <dbReference type="ChEBI" id="CHEBI:57287"/>
    </ligand>
</feature>
<feature type="binding site" evidence="1">
    <location>
        <position position="335"/>
    </location>
    <ligand>
        <name>CoA</name>
        <dbReference type="ChEBI" id="CHEBI:57287"/>
    </ligand>
</feature>
<feature type="binding site" evidence="1">
    <location>
        <begin position="387"/>
        <end position="389"/>
    </location>
    <ligand>
        <name>ATP</name>
        <dbReference type="ChEBI" id="CHEBI:30616"/>
    </ligand>
</feature>
<feature type="binding site" evidence="1">
    <location>
        <begin position="411"/>
        <end position="416"/>
    </location>
    <ligand>
        <name>ATP</name>
        <dbReference type="ChEBI" id="CHEBI:30616"/>
    </ligand>
</feature>
<feature type="binding site" evidence="1">
    <location>
        <position position="500"/>
    </location>
    <ligand>
        <name>ATP</name>
        <dbReference type="ChEBI" id="CHEBI:30616"/>
    </ligand>
</feature>
<feature type="binding site" evidence="1">
    <location>
        <position position="515"/>
    </location>
    <ligand>
        <name>ATP</name>
        <dbReference type="ChEBI" id="CHEBI:30616"/>
    </ligand>
</feature>
<feature type="binding site" evidence="1">
    <location>
        <position position="523"/>
    </location>
    <ligand>
        <name>CoA</name>
        <dbReference type="ChEBI" id="CHEBI:57287"/>
    </ligand>
</feature>
<feature type="binding site" evidence="1">
    <location>
        <position position="526"/>
    </location>
    <ligand>
        <name>ATP</name>
        <dbReference type="ChEBI" id="CHEBI:30616"/>
    </ligand>
</feature>
<feature type="binding site" evidence="1">
    <location>
        <position position="537"/>
    </location>
    <ligand>
        <name>Mg(2+)</name>
        <dbReference type="ChEBI" id="CHEBI:18420"/>
    </ligand>
</feature>
<feature type="binding site" evidence="1">
    <location>
        <position position="539"/>
    </location>
    <ligand>
        <name>Mg(2+)</name>
        <dbReference type="ChEBI" id="CHEBI:18420"/>
    </ligand>
</feature>
<feature type="binding site" evidence="1">
    <location>
        <position position="542"/>
    </location>
    <ligand>
        <name>Mg(2+)</name>
        <dbReference type="ChEBI" id="CHEBI:18420"/>
    </ligand>
</feature>
<feature type="binding site" evidence="1">
    <location>
        <position position="584"/>
    </location>
    <ligand>
        <name>CoA</name>
        <dbReference type="ChEBI" id="CHEBI:57287"/>
    </ligand>
</feature>
<feature type="modified residue" description="N6-acetyllysine" evidence="1">
    <location>
        <position position="609"/>
    </location>
</feature>